<organism>
    <name type="scientific">Desulforamulus reducens (strain ATCC BAA-1160 / DSM 100696 / MI-1)</name>
    <name type="common">Desulfotomaculum reducens</name>
    <dbReference type="NCBI Taxonomy" id="349161"/>
    <lineage>
        <taxon>Bacteria</taxon>
        <taxon>Bacillati</taxon>
        <taxon>Bacillota</taxon>
        <taxon>Clostridia</taxon>
        <taxon>Eubacteriales</taxon>
        <taxon>Peptococcaceae</taxon>
        <taxon>Desulforamulus</taxon>
    </lineage>
</organism>
<name>SURE_DESRM</name>
<sequence length="253" mass="27857">MRILISNDDGIYADGIGQLRKAMETIASEVYVVAPDRERSACGHGITVTRPLRAKVHPFKSGHAKGWVIDGTPADCVKLGLESLLENPPDLVVSGINLGPNLGTDVLYSGTVSAAYEAIINHVPAIAVSLAAWEELNYQVAADFMKDFIPMLKEHPMGEGMLLNINIPNNYNGRGIKVTRLGRRRYIKCFDKRVDPRGKTYFWMAGEPQNLDDDDPETDAAAVNDGYVSVTPLHLDLTDYSYKKKLAGWLPTK</sequence>
<evidence type="ECO:0000255" key="1">
    <source>
        <dbReference type="HAMAP-Rule" id="MF_00060"/>
    </source>
</evidence>
<feature type="chain" id="PRO_1000071160" description="5'-nucleotidase SurE">
    <location>
        <begin position="1"/>
        <end position="253"/>
    </location>
</feature>
<feature type="binding site" evidence="1">
    <location>
        <position position="8"/>
    </location>
    <ligand>
        <name>a divalent metal cation</name>
        <dbReference type="ChEBI" id="CHEBI:60240"/>
    </ligand>
</feature>
<feature type="binding site" evidence="1">
    <location>
        <position position="9"/>
    </location>
    <ligand>
        <name>a divalent metal cation</name>
        <dbReference type="ChEBI" id="CHEBI:60240"/>
    </ligand>
</feature>
<feature type="binding site" evidence="1">
    <location>
        <position position="40"/>
    </location>
    <ligand>
        <name>a divalent metal cation</name>
        <dbReference type="ChEBI" id="CHEBI:60240"/>
    </ligand>
</feature>
<feature type="binding site" evidence="1">
    <location>
        <position position="97"/>
    </location>
    <ligand>
        <name>a divalent metal cation</name>
        <dbReference type="ChEBI" id="CHEBI:60240"/>
    </ligand>
</feature>
<comment type="function">
    <text evidence="1">Nucleotidase that shows phosphatase activity on nucleoside 5'-monophosphates.</text>
</comment>
<comment type="catalytic activity">
    <reaction evidence="1">
        <text>a ribonucleoside 5'-phosphate + H2O = a ribonucleoside + phosphate</text>
        <dbReference type="Rhea" id="RHEA:12484"/>
        <dbReference type="ChEBI" id="CHEBI:15377"/>
        <dbReference type="ChEBI" id="CHEBI:18254"/>
        <dbReference type="ChEBI" id="CHEBI:43474"/>
        <dbReference type="ChEBI" id="CHEBI:58043"/>
        <dbReference type="EC" id="3.1.3.5"/>
    </reaction>
</comment>
<comment type="cofactor">
    <cofactor evidence="1">
        <name>a divalent metal cation</name>
        <dbReference type="ChEBI" id="CHEBI:60240"/>
    </cofactor>
    <text evidence="1">Binds 1 divalent metal cation per subunit.</text>
</comment>
<comment type="subcellular location">
    <subcellularLocation>
        <location evidence="1">Cytoplasm</location>
    </subcellularLocation>
</comment>
<comment type="similarity">
    <text evidence="1">Belongs to the SurE nucleotidase family.</text>
</comment>
<accession>A4J5D2</accession>
<keyword id="KW-0963">Cytoplasm</keyword>
<keyword id="KW-0378">Hydrolase</keyword>
<keyword id="KW-0479">Metal-binding</keyword>
<keyword id="KW-0547">Nucleotide-binding</keyword>
<keyword id="KW-1185">Reference proteome</keyword>
<protein>
    <recommendedName>
        <fullName evidence="1">5'-nucleotidase SurE</fullName>
        <ecNumber evidence="1">3.1.3.5</ecNumber>
    </recommendedName>
    <alternativeName>
        <fullName evidence="1">Nucleoside 5'-monophosphate phosphohydrolase</fullName>
    </alternativeName>
</protein>
<proteinExistence type="inferred from homology"/>
<gene>
    <name evidence="1" type="primary">surE</name>
    <name type="ordered locus">Dred_1760</name>
</gene>
<dbReference type="EC" id="3.1.3.5" evidence="1"/>
<dbReference type="EMBL" id="CP000612">
    <property type="protein sequence ID" value="ABO50285.1"/>
    <property type="molecule type" value="Genomic_DNA"/>
</dbReference>
<dbReference type="RefSeq" id="WP_011878099.1">
    <property type="nucleotide sequence ID" value="NC_009253.1"/>
</dbReference>
<dbReference type="SMR" id="A4J5D2"/>
<dbReference type="STRING" id="349161.Dred_1760"/>
<dbReference type="KEGG" id="drm:Dred_1760"/>
<dbReference type="eggNOG" id="COG0496">
    <property type="taxonomic scope" value="Bacteria"/>
</dbReference>
<dbReference type="HOGENOM" id="CLU_045192_1_3_9"/>
<dbReference type="OrthoDB" id="9780815at2"/>
<dbReference type="Proteomes" id="UP000001556">
    <property type="component" value="Chromosome"/>
</dbReference>
<dbReference type="GO" id="GO:0005737">
    <property type="term" value="C:cytoplasm"/>
    <property type="evidence" value="ECO:0007669"/>
    <property type="project" value="UniProtKB-SubCell"/>
</dbReference>
<dbReference type="GO" id="GO:0008254">
    <property type="term" value="F:3'-nucleotidase activity"/>
    <property type="evidence" value="ECO:0007669"/>
    <property type="project" value="TreeGrafter"/>
</dbReference>
<dbReference type="GO" id="GO:0008253">
    <property type="term" value="F:5'-nucleotidase activity"/>
    <property type="evidence" value="ECO:0007669"/>
    <property type="project" value="UniProtKB-UniRule"/>
</dbReference>
<dbReference type="GO" id="GO:0004309">
    <property type="term" value="F:exopolyphosphatase activity"/>
    <property type="evidence" value="ECO:0007669"/>
    <property type="project" value="TreeGrafter"/>
</dbReference>
<dbReference type="GO" id="GO:0046872">
    <property type="term" value="F:metal ion binding"/>
    <property type="evidence" value="ECO:0007669"/>
    <property type="project" value="UniProtKB-UniRule"/>
</dbReference>
<dbReference type="GO" id="GO:0000166">
    <property type="term" value="F:nucleotide binding"/>
    <property type="evidence" value="ECO:0007669"/>
    <property type="project" value="UniProtKB-KW"/>
</dbReference>
<dbReference type="FunFam" id="3.40.1210.10:FF:000001">
    <property type="entry name" value="5'/3'-nucleotidase SurE"/>
    <property type="match status" value="1"/>
</dbReference>
<dbReference type="Gene3D" id="3.40.1210.10">
    <property type="entry name" value="Survival protein SurE-like phosphatase/nucleotidase"/>
    <property type="match status" value="1"/>
</dbReference>
<dbReference type="HAMAP" id="MF_00060">
    <property type="entry name" value="SurE"/>
    <property type="match status" value="1"/>
</dbReference>
<dbReference type="InterPro" id="IPR030048">
    <property type="entry name" value="SurE"/>
</dbReference>
<dbReference type="InterPro" id="IPR002828">
    <property type="entry name" value="SurE-like_Pase/nucleotidase"/>
</dbReference>
<dbReference type="InterPro" id="IPR036523">
    <property type="entry name" value="SurE-like_sf"/>
</dbReference>
<dbReference type="NCBIfam" id="NF001490">
    <property type="entry name" value="PRK00346.1-4"/>
    <property type="match status" value="1"/>
</dbReference>
<dbReference type="NCBIfam" id="NF001492">
    <property type="entry name" value="PRK00346.2-2"/>
    <property type="match status" value="1"/>
</dbReference>
<dbReference type="NCBIfam" id="TIGR00087">
    <property type="entry name" value="surE"/>
    <property type="match status" value="1"/>
</dbReference>
<dbReference type="PANTHER" id="PTHR30457">
    <property type="entry name" value="5'-NUCLEOTIDASE SURE"/>
    <property type="match status" value="1"/>
</dbReference>
<dbReference type="PANTHER" id="PTHR30457:SF12">
    <property type="entry name" value="5'_3'-NUCLEOTIDASE SURE"/>
    <property type="match status" value="1"/>
</dbReference>
<dbReference type="Pfam" id="PF01975">
    <property type="entry name" value="SurE"/>
    <property type="match status" value="1"/>
</dbReference>
<dbReference type="SUPFAM" id="SSF64167">
    <property type="entry name" value="SurE-like"/>
    <property type="match status" value="1"/>
</dbReference>
<reference key="1">
    <citation type="submission" date="2007-03" db="EMBL/GenBank/DDBJ databases">
        <title>Complete sequence of Desulfotomaculum reducens MI-1.</title>
        <authorList>
            <consortium name="US DOE Joint Genome Institute"/>
            <person name="Copeland A."/>
            <person name="Lucas S."/>
            <person name="Lapidus A."/>
            <person name="Barry K."/>
            <person name="Detter J.C."/>
            <person name="Glavina del Rio T."/>
            <person name="Hammon N."/>
            <person name="Israni S."/>
            <person name="Dalin E."/>
            <person name="Tice H."/>
            <person name="Pitluck S."/>
            <person name="Sims D."/>
            <person name="Brettin T."/>
            <person name="Bruce D."/>
            <person name="Han C."/>
            <person name="Tapia R."/>
            <person name="Schmutz J."/>
            <person name="Larimer F."/>
            <person name="Land M."/>
            <person name="Hauser L."/>
            <person name="Kyrpides N."/>
            <person name="Kim E."/>
            <person name="Tebo B.M."/>
            <person name="Richardson P."/>
        </authorList>
    </citation>
    <scope>NUCLEOTIDE SEQUENCE [LARGE SCALE GENOMIC DNA]</scope>
    <source>
        <strain>ATCC BAA-1160 / DSM 100696 / MI-1</strain>
    </source>
</reference>